<feature type="chain" id="PRO_0000076401" description="UPF0313 protein VV2143">
    <location>
        <begin position="1"/>
        <end position="768"/>
    </location>
</feature>
<feature type="domain" description="Radical SAM core" evidence="2">
    <location>
        <begin position="363"/>
        <end position="640"/>
    </location>
</feature>
<feature type="region of interest" description="Disordered" evidence="3">
    <location>
        <begin position="674"/>
        <end position="768"/>
    </location>
</feature>
<feature type="compositionally biased region" description="Basic residues" evidence="3">
    <location>
        <begin position="679"/>
        <end position="689"/>
    </location>
</feature>
<feature type="compositionally biased region" description="Polar residues" evidence="3">
    <location>
        <begin position="719"/>
        <end position="731"/>
    </location>
</feature>
<feature type="binding site" evidence="1">
    <location>
        <position position="377"/>
    </location>
    <ligand>
        <name>[4Fe-4S] cluster</name>
        <dbReference type="ChEBI" id="CHEBI:49883"/>
        <note>4Fe-4S-S-AdoMet</note>
    </ligand>
</feature>
<feature type="binding site" evidence="1">
    <location>
        <position position="381"/>
    </location>
    <ligand>
        <name>[4Fe-4S] cluster</name>
        <dbReference type="ChEBI" id="CHEBI:49883"/>
        <note>4Fe-4S-S-AdoMet</note>
    </ligand>
</feature>
<feature type="binding site" evidence="1">
    <location>
        <position position="384"/>
    </location>
    <ligand>
        <name>[4Fe-4S] cluster</name>
        <dbReference type="ChEBI" id="CHEBI:49883"/>
        <note>4Fe-4S-S-AdoMet</note>
    </ligand>
</feature>
<gene>
    <name type="ordered locus">VV2143</name>
</gene>
<comment type="cofactor">
    <cofactor evidence="1">
        <name>[4Fe-4S] cluster</name>
        <dbReference type="ChEBI" id="CHEBI:49883"/>
    </cofactor>
    <text evidence="1">Binds 1 [4Fe-4S] cluster. The cluster is coordinated with 3 cysteines and an exchangeable S-adenosyl-L-methionine.</text>
</comment>
<comment type="similarity">
    <text evidence="1">Belongs to the UPF0313 family.</text>
</comment>
<reference key="1">
    <citation type="journal article" date="2003" name="Genome Res.">
        <title>Comparative genome analysis of Vibrio vulnificus, a marine pathogen.</title>
        <authorList>
            <person name="Chen C.-Y."/>
            <person name="Wu K.-M."/>
            <person name="Chang Y.-C."/>
            <person name="Chang C.-H."/>
            <person name="Tsai H.-C."/>
            <person name="Liao T.-L."/>
            <person name="Liu Y.-M."/>
            <person name="Chen H.-J."/>
            <person name="Shen A.B.-T."/>
            <person name="Li J.-C."/>
            <person name="Su T.-L."/>
            <person name="Shao C.-P."/>
            <person name="Lee C.-T."/>
            <person name="Hor L.-I."/>
            <person name="Tsai S.-F."/>
        </authorList>
    </citation>
    <scope>NUCLEOTIDE SEQUENCE [LARGE SCALE GENOMIC DNA]</scope>
    <source>
        <strain>YJ016</strain>
    </source>
</reference>
<evidence type="ECO:0000255" key="1">
    <source>
        <dbReference type="HAMAP-Rule" id="MF_01251"/>
    </source>
</evidence>
<evidence type="ECO:0000255" key="2">
    <source>
        <dbReference type="PROSITE-ProRule" id="PRU01266"/>
    </source>
</evidence>
<evidence type="ECO:0000256" key="3">
    <source>
        <dbReference type="SAM" id="MobiDB-lite"/>
    </source>
</evidence>
<sequence length="768" mass="85801">MHSDITPIHTHKKYWAECFGTAPFLPTSRKEMDALGWDSCDIVLVTGDAYVDHPSFGMAIIGRLLEAQGFRVGIIAQPQWQDKTDFMSLGKPNLFFGVTSGNMDSMINRYTSDRKLRHDDAYTPNNEGGKRPDRATLVYSQRCREAYKDVPIVLGGIEASLRRVAHYDYWSDKVRRSVLLDAKADILLFGNAERALVEVAHRLAEGEEIAQMTNIRGTAVNLAAEPEGYTIIDSSRIEKPRKEAFIPPNPYEVETQCETKSEEPKAQPITIRPSRHDAATTAVRLPSFEKLQNDRILYAHASRILHLETNPYSGRALIQRHGNRELWVNQAPIPLTTEEMDYVFGLPYARVPHPKYGKAKIPAYDMIKTSVNIMRGCFGGCSFCSITEHEGRIIQNRSQESILTELEEIRDKVPGFTGTISDLGGPTANMYRLGCSDPKAEANCRRPSCVFPGICNKLNTDHKHTIDLYRAARQVKGVKKVMIASGVRYDLAIESPEYVKELVTHHVGGYLKIAPEHTEKGPLDLMMKPGMGTYDRFKEMFDKYSQEAGKKQYLIPYFISAHPGTTDEDMLNLALWLKKNNYECDQVQNFYPSPMCNATSMYYSETNPLKRVKYKQREDVPVAKGDRQRRLHKALLRYHDPANWPLIREALITMGKKYLIGDKPGCLVPAEDVDARTPAQRRKSGRHGANRFATKHTSTQPGFPGDKANAGSGKKPTRGGQSNSAPSRSGSATGGKHPQRSGANTGGKSSGGKNSPRAGGRNQPSRAR</sequence>
<dbReference type="EMBL" id="BA000037">
    <property type="protein sequence ID" value="BAC94907.1"/>
    <property type="molecule type" value="Genomic_DNA"/>
</dbReference>
<dbReference type="RefSeq" id="WP_011150657.1">
    <property type="nucleotide sequence ID" value="NC_005139.1"/>
</dbReference>
<dbReference type="STRING" id="672.VV93_v1c19050"/>
<dbReference type="KEGG" id="vvy:VV2143"/>
<dbReference type="eggNOG" id="COG1032">
    <property type="taxonomic scope" value="Bacteria"/>
</dbReference>
<dbReference type="HOGENOM" id="CLU_018288_2_0_6"/>
<dbReference type="Proteomes" id="UP000002675">
    <property type="component" value="Chromosome I"/>
</dbReference>
<dbReference type="GO" id="GO:0051539">
    <property type="term" value="F:4 iron, 4 sulfur cluster binding"/>
    <property type="evidence" value="ECO:0007669"/>
    <property type="project" value="UniProtKB-KW"/>
</dbReference>
<dbReference type="GO" id="GO:0003824">
    <property type="term" value="F:catalytic activity"/>
    <property type="evidence" value="ECO:0007669"/>
    <property type="project" value="InterPro"/>
</dbReference>
<dbReference type="GO" id="GO:0005506">
    <property type="term" value="F:iron ion binding"/>
    <property type="evidence" value="ECO:0007669"/>
    <property type="project" value="UniProtKB-UniRule"/>
</dbReference>
<dbReference type="Gene3D" id="3.80.30.20">
    <property type="entry name" value="tm_1862 like domain"/>
    <property type="match status" value="1"/>
</dbReference>
<dbReference type="HAMAP" id="MF_01251">
    <property type="entry name" value="UPF0313"/>
    <property type="match status" value="1"/>
</dbReference>
<dbReference type="InterPro" id="IPR006638">
    <property type="entry name" value="Elp3/MiaA/NifB-like_rSAM"/>
</dbReference>
<dbReference type="InterPro" id="IPR020612">
    <property type="entry name" value="Methylthiotransferase_CS"/>
</dbReference>
<dbReference type="InterPro" id="IPR007197">
    <property type="entry name" value="rSAM"/>
</dbReference>
<dbReference type="InterPro" id="IPR023404">
    <property type="entry name" value="rSAM_horseshoe"/>
</dbReference>
<dbReference type="InterPro" id="IPR022946">
    <property type="entry name" value="UPF0313"/>
</dbReference>
<dbReference type="InterPro" id="IPR024560">
    <property type="entry name" value="UPF0313_C"/>
</dbReference>
<dbReference type="InterPro" id="IPR013704">
    <property type="entry name" value="UPF0313_N"/>
</dbReference>
<dbReference type="NCBIfam" id="TIGR03904">
    <property type="entry name" value="SAM_YgiQ"/>
    <property type="match status" value="1"/>
</dbReference>
<dbReference type="PANTHER" id="PTHR32331">
    <property type="entry name" value="UPF0313 PROTEIN YGIQ"/>
    <property type="match status" value="1"/>
</dbReference>
<dbReference type="PANTHER" id="PTHR32331:SF0">
    <property type="entry name" value="UPF0313 PROTEIN YGIQ"/>
    <property type="match status" value="1"/>
</dbReference>
<dbReference type="Pfam" id="PF11842">
    <property type="entry name" value="DUF3362"/>
    <property type="match status" value="1"/>
</dbReference>
<dbReference type="Pfam" id="PF04055">
    <property type="entry name" value="Radical_SAM"/>
    <property type="match status" value="1"/>
</dbReference>
<dbReference type="Pfam" id="PF08497">
    <property type="entry name" value="Radical_SAM_N"/>
    <property type="match status" value="1"/>
</dbReference>
<dbReference type="SFLD" id="SFLDG01082">
    <property type="entry name" value="B12-binding_domain_containing"/>
    <property type="match status" value="1"/>
</dbReference>
<dbReference type="SFLD" id="SFLDS00029">
    <property type="entry name" value="Radical_SAM"/>
    <property type="match status" value="1"/>
</dbReference>
<dbReference type="SFLD" id="SFLDG01069">
    <property type="entry name" value="UPF0313"/>
    <property type="match status" value="1"/>
</dbReference>
<dbReference type="SMART" id="SM00729">
    <property type="entry name" value="Elp3"/>
    <property type="match status" value="1"/>
</dbReference>
<dbReference type="SUPFAM" id="SSF102114">
    <property type="entry name" value="Radical SAM enzymes"/>
    <property type="match status" value="1"/>
</dbReference>
<dbReference type="PROSITE" id="PS51918">
    <property type="entry name" value="RADICAL_SAM"/>
    <property type="match status" value="1"/>
</dbReference>
<name>Y2143_VIBVY</name>
<keyword id="KW-0004">4Fe-4S</keyword>
<keyword id="KW-0408">Iron</keyword>
<keyword id="KW-0411">Iron-sulfur</keyword>
<keyword id="KW-0479">Metal-binding</keyword>
<keyword id="KW-0949">S-adenosyl-L-methionine</keyword>
<proteinExistence type="inferred from homology"/>
<accession>Q7MJL8</accession>
<organism>
    <name type="scientific">Vibrio vulnificus (strain YJ016)</name>
    <dbReference type="NCBI Taxonomy" id="196600"/>
    <lineage>
        <taxon>Bacteria</taxon>
        <taxon>Pseudomonadati</taxon>
        <taxon>Pseudomonadota</taxon>
        <taxon>Gammaproteobacteria</taxon>
        <taxon>Vibrionales</taxon>
        <taxon>Vibrionaceae</taxon>
        <taxon>Vibrio</taxon>
    </lineage>
</organism>
<protein>
    <recommendedName>
        <fullName evidence="1">UPF0313 protein VV2143</fullName>
    </recommendedName>
</protein>